<geneLocation type="chloroplast"/>
<reference key="1">
    <citation type="journal article" date="1995" name="Bot. Acta">
        <title>Molecular phylogeny of the Papilionoideae (family Leguminosae): rbcL sequences versus chemical taxonomy.</title>
        <authorList>
            <person name="Kaess E."/>
            <person name="Wink M."/>
        </authorList>
    </citation>
    <scope>NUCLEOTIDE SEQUENCE [GENOMIC DNA]</scope>
    <source>
        <tissue>Leaf</tissue>
    </source>
</reference>
<keyword id="KW-0113">Calvin cycle</keyword>
<keyword id="KW-0120">Carbon dioxide fixation</keyword>
<keyword id="KW-0150">Chloroplast</keyword>
<keyword id="KW-1015">Disulfide bond</keyword>
<keyword id="KW-0456">Lyase</keyword>
<keyword id="KW-0460">Magnesium</keyword>
<keyword id="KW-0479">Metal-binding</keyword>
<keyword id="KW-0488">Methylation</keyword>
<keyword id="KW-0503">Monooxygenase</keyword>
<keyword id="KW-0560">Oxidoreductase</keyword>
<keyword id="KW-0601">Photorespiration</keyword>
<keyword id="KW-0602">Photosynthesis</keyword>
<keyword id="KW-0934">Plastid</keyword>
<protein>
    <recommendedName>
        <fullName evidence="1">Ribulose bisphosphate carboxylase large chain</fullName>
        <shortName evidence="1">RuBisCO large subunit</shortName>
        <ecNumber evidence="1">4.1.1.39</ecNumber>
    </recommendedName>
</protein>
<dbReference type="EC" id="4.1.1.39" evidence="1"/>
<dbReference type="EMBL" id="Z70064">
    <property type="protein sequence ID" value="CAA93923.1"/>
    <property type="molecule type" value="Genomic_DNA"/>
</dbReference>
<dbReference type="SMR" id="P69575"/>
<dbReference type="GO" id="GO:0009507">
    <property type="term" value="C:chloroplast"/>
    <property type="evidence" value="ECO:0007669"/>
    <property type="project" value="UniProtKB-SubCell"/>
</dbReference>
<dbReference type="GO" id="GO:0000287">
    <property type="term" value="F:magnesium ion binding"/>
    <property type="evidence" value="ECO:0007669"/>
    <property type="project" value="InterPro"/>
</dbReference>
<dbReference type="GO" id="GO:0004497">
    <property type="term" value="F:monooxygenase activity"/>
    <property type="evidence" value="ECO:0007669"/>
    <property type="project" value="UniProtKB-KW"/>
</dbReference>
<dbReference type="GO" id="GO:0016984">
    <property type="term" value="F:ribulose-bisphosphate carboxylase activity"/>
    <property type="evidence" value="ECO:0007669"/>
    <property type="project" value="UniProtKB-EC"/>
</dbReference>
<dbReference type="GO" id="GO:0009853">
    <property type="term" value="P:photorespiration"/>
    <property type="evidence" value="ECO:0007669"/>
    <property type="project" value="UniProtKB-KW"/>
</dbReference>
<dbReference type="GO" id="GO:0019253">
    <property type="term" value="P:reductive pentose-phosphate cycle"/>
    <property type="evidence" value="ECO:0007669"/>
    <property type="project" value="UniProtKB-KW"/>
</dbReference>
<dbReference type="CDD" id="cd08212">
    <property type="entry name" value="RuBisCO_large_I"/>
    <property type="match status" value="1"/>
</dbReference>
<dbReference type="FunFam" id="3.20.20.110:FF:000001">
    <property type="entry name" value="Ribulose bisphosphate carboxylase large chain"/>
    <property type="match status" value="1"/>
</dbReference>
<dbReference type="FunFam" id="3.30.70.150:FF:000001">
    <property type="entry name" value="Ribulose bisphosphate carboxylase large chain"/>
    <property type="match status" value="1"/>
</dbReference>
<dbReference type="Gene3D" id="3.20.20.110">
    <property type="entry name" value="Ribulose bisphosphate carboxylase, large subunit, C-terminal domain"/>
    <property type="match status" value="1"/>
</dbReference>
<dbReference type="Gene3D" id="3.30.70.150">
    <property type="entry name" value="RuBisCO large subunit, N-terminal domain"/>
    <property type="match status" value="1"/>
</dbReference>
<dbReference type="HAMAP" id="MF_01338">
    <property type="entry name" value="RuBisCO_L_type1"/>
    <property type="match status" value="1"/>
</dbReference>
<dbReference type="InterPro" id="IPR033966">
    <property type="entry name" value="RuBisCO"/>
</dbReference>
<dbReference type="InterPro" id="IPR020878">
    <property type="entry name" value="RuBisCo_large_chain_AS"/>
</dbReference>
<dbReference type="InterPro" id="IPR000685">
    <property type="entry name" value="RuBisCO_lsu_C"/>
</dbReference>
<dbReference type="InterPro" id="IPR036376">
    <property type="entry name" value="RuBisCO_lsu_C_sf"/>
</dbReference>
<dbReference type="InterPro" id="IPR017443">
    <property type="entry name" value="RuBisCO_lsu_fd_N"/>
</dbReference>
<dbReference type="InterPro" id="IPR036422">
    <property type="entry name" value="RuBisCO_lsu_N_sf"/>
</dbReference>
<dbReference type="InterPro" id="IPR020888">
    <property type="entry name" value="RuBisCO_lsuI"/>
</dbReference>
<dbReference type="NCBIfam" id="NF003252">
    <property type="entry name" value="PRK04208.1"/>
    <property type="match status" value="1"/>
</dbReference>
<dbReference type="PANTHER" id="PTHR42704">
    <property type="entry name" value="RIBULOSE BISPHOSPHATE CARBOXYLASE"/>
    <property type="match status" value="1"/>
</dbReference>
<dbReference type="PANTHER" id="PTHR42704:SF16">
    <property type="entry name" value="RIBULOSE BISPHOSPHATE CARBOXYLASE LARGE CHAIN"/>
    <property type="match status" value="1"/>
</dbReference>
<dbReference type="Pfam" id="PF00016">
    <property type="entry name" value="RuBisCO_large"/>
    <property type="match status" value="1"/>
</dbReference>
<dbReference type="Pfam" id="PF02788">
    <property type="entry name" value="RuBisCO_large_N"/>
    <property type="match status" value="1"/>
</dbReference>
<dbReference type="SFLD" id="SFLDG01052">
    <property type="entry name" value="RuBisCO"/>
    <property type="match status" value="1"/>
</dbReference>
<dbReference type="SFLD" id="SFLDS00014">
    <property type="entry name" value="RuBisCO"/>
    <property type="match status" value="1"/>
</dbReference>
<dbReference type="SFLD" id="SFLDG00301">
    <property type="entry name" value="RuBisCO-like_proteins"/>
    <property type="match status" value="1"/>
</dbReference>
<dbReference type="SUPFAM" id="SSF51649">
    <property type="entry name" value="RuBisCo, C-terminal domain"/>
    <property type="match status" value="1"/>
</dbReference>
<dbReference type="SUPFAM" id="SSF54966">
    <property type="entry name" value="RuBisCO, large subunit, small (N-terminal) domain"/>
    <property type="match status" value="1"/>
</dbReference>
<dbReference type="PROSITE" id="PS00157">
    <property type="entry name" value="RUBISCO_LARGE"/>
    <property type="match status" value="1"/>
</dbReference>
<feature type="chain" id="PRO_0000062509" description="Ribulose bisphosphate carboxylase large chain">
    <location>
        <begin position="1" status="less than"/>
        <end position="455" status="greater than"/>
    </location>
</feature>
<feature type="active site" description="Proton acceptor" evidence="1">
    <location>
        <position position="166"/>
    </location>
</feature>
<feature type="active site" description="Proton acceptor" evidence="1">
    <location>
        <position position="285"/>
    </location>
</feature>
<feature type="binding site" description="in homodimeric partner" evidence="1">
    <location>
        <position position="114"/>
    </location>
    <ligand>
        <name>substrate</name>
    </ligand>
</feature>
<feature type="binding site" evidence="1">
    <location>
        <position position="164"/>
    </location>
    <ligand>
        <name>substrate</name>
    </ligand>
</feature>
<feature type="binding site" evidence="1">
    <location>
        <position position="168"/>
    </location>
    <ligand>
        <name>substrate</name>
    </ligand>
</feature>
<feature type="binding site" description="via carbamate group" evidence="1">
    <location>
        <position position="192"/>
    </location>
    <ligand>
        <name>Mg(2+)</name>
        <dbReference type="ChEBI" id="CHEBI:18420"/>
    </ligand>
</feature>
<feature type="binding site" evidence="1">
    <location>
        <position position="194"/>
    </location>
    <ligand>
        <name>Mg(2+)</name>
        <dbReference type="ChEBI" id="CHEBI:18420"/>
    </ligand>
</feature>
<feature type="binding site" evidence="1">
    <location>
        <position position="195"/>
    </location>
    <ligand>
        <name>Mg(2+)</name>
        <dbReference type="ChEBI" id="CHEBI:18420"/>
    </ligand>
</feature>
<feature type="binding site" evidence="1">
    <location>
        <position position="286"/>
    </location>
    <ligand>
        <name>substrate</name>
    </ligand>
</feature>
<feature type="binding site" evidence="1">
    <location>
        <position position="318"/>
    </location>
    <ligand>
        <name>substrate</name>
    </ligand>
</feature>
<feature type="binding site" evidence="1">
    <location>
        <position position="370"/>
    </location>
    <ligand>
        <name>substrate</name>
    </ligand>
</feature>
<feature type="site" description="Transition state stabilizer" evidence="1">
    <location>
        <position position="325"/>
    </location>
</feature>
<feature type="modified residue" description="N6,N6,N6-trimethyllysine" evidence="1">
    <location>
        <position position="5"/>
    </location>
</feature>
<feature type="modified residue" description="N6-carboxylysine" evidence="1">
    <location>
        <position position="192"/>
    </location>
</feature>
<feature type="disulfide bond" description="Interchain; in linked form" evidence="1">
    <location>
        <position position="238"/>
    </location>
</feature>
<feature type="non-terminal residue">
    <location>
        <position position="1"/>
    </location>
</feature>
<feature type="non-terminal residue">
    <location>
        <position position="455"/>
    </location>
</feature>
<comment type="function">
    <text evidence="1">RuBisCO catalyzes two reactions: the carboxylation of D-ribulose 1,5-bisphosphate, the primary event in carbon dioxide fixation, as well as the oxidative fragmentation of the pentose substrate in the photorespiration process. Both reactions occur simultaneously and in competition at the same active site.</text>
</comment>
<comment type="catalytic activity">
    <reaction evidence="1">
        <text>2 (2R)-3-phosphoglycerate + 2 H(+) = D-ribulose 1,5-bisphosphate + CO2 + H2O</text>
        <dbReference type="Rhea" id="RHEA:23124"/>
        <dbReference type="ChEBI" id="CHEBI:15377"/>
        <dbReference type="ChEBI" id="CHEBI:15378"/>
        <dbReference type="ChEBI" id="CHEBI:16526"/>
        <dbReference type="ChEBI" id="CHEBI:57870"/>
        <dbReference type="ChEBI" id="CHEBI:58272"/>
        <dbReference type="EC" id="4.1.1.39"/>
    </reaction>
</comment>
<comment type="catalytic activity">
    <reaction evidence="1">
        <text>D-ribulose 1,5-bisphosphate + O2 = 2-phosphoglycolate + (2R)-3-phosphoglycerate + 2 H(+)</text>
        <dbReference type="Rhea" id="RHEA:36631"/>
        <dbReference type="ChEBI" id="CHEBI:15378"/>
        <dbReference type="ChEBI" id="CHEBI:15379"/>
        <dbReference type="ChEBI" id="CHEBI:57870"/>
        <dbReference type="ChEBI" id="CHEBI:58033"/>
        <dbReference type="ChEBI" id="CHEBI:58272"/>
    </reaction>
</comment>
<comment type="cofactor">
    <cofactor evidence="1">
        <name>Mg(2+)</name>
        <dbReference type="ChEBI" id="CHEBI:18420"/>
    </cofactor>
    <text evidence="1">Binds 1 Mg(2+) ion per subunit.</text>
</comment>
<comment type="subunit">
    <text evidence="1">Heterohexadecamer of 8 large chains and 8 small chains; disulfide-linked. The disulfide link is formed within the large subunit homodimers.</text>
</comment>
<comment type="subcellular location">
    <subcellularLocation>
        <location>Plastid</location>
        <location>Chloroplast</location>
    </subcellularLocation>
</comment>
<comment type="PTM">
    <text evidence="1">The disulfide bond which can form in the large chain dimeric partners within the hexadecamer appears to be associated with oxidative stress and protein turnover.</text>
</comment>
<comment type="miscellaneous">
    <text evidence="1">The basic functional RuBisCO is composed of a large chain homodimer in a 'head-to-tail' conformation. In form I RuBisCO this homodimer is arranged in a barrel-like tetramer with the small subunits forming a tetrameric 'cap' on each end of the 'barrel'.</text>
</comment>
<comment type="similarity">
    <text evidence="1">Belongs to the RuBisCO large chain family. Type I subfamily.</text>
</comment>
<evidence type="ECO:0000255" key="1">
    <source>
        <dbReference type="HAMAP-Rule" id="MF_01338"/>
    </source>
</evidence>
<accession>P69575</accession>
<accession>P52773</accession>
<accession>P52774</accession>
<gene>
    <name evidence="1" type="primary">rbcL</name>
</gene>
<proteinExistence type="inferred from homology"/>
<organism>
    <name type="scientific">Lupinus angustifolius</name>
    <name type="common">Narrow-leaved blue lupine</name>
    <dbReference type="NCBI Taxonomy" id="3871"/>
    <lineage>
        <taxon>Eukaryota</taxon>
        <taxon>Viridiplantae</taxon>
        <taxon>Streptophyta</taxon>
        <taxon>Embryophyta</taxon>
        <taxon>Tracheophyta</taxon>
        <taxon>Spermatophyta</taxon>
        <taxon>Magnoliopsida</taxon>
        <taxon>eudicotyledons</taxon>
        <taxon>Gunneridae</taxon>
        <taxon>Pentapetalae</taxon>
        <taxon>rosids</taxon>
        <taxon>fabids</taxon>
        <taxon>Fabales</taxon>
        <taxon>Fabaceae</taxon>
        <taxon>Papilionoideae</taxon>
        <taxon>50 kb inversion clade</taxon>
        <taxon>genistoids sensu lato</taxon>
        <taxon>core genistoids</taxon>
        <taxon>Genisteae</taxon>
        <taxon>Lupinus</taxon>
    </lineage>
</organism>
<name>RBL_LUPAN</name>
<sequence length="455" mass="50303">SVGFKAGVKDYKLTYYTPDYKTKDTDILAAFRVTPQPGVPPEEAGAAVAAESSTGTWTTVWTDGLTSLDRYKGRCYHIEPVAGEESQFIAYVAYPLDLFEEGSVTNMFTSIVGNVFGFKALRALRLEDLRIPNAYVKTFQGPPHGIQVERDKLNKYGRPLLGCTIKPKLGLSAKNYGRAVYECLRGGLDFTKDDENVNSQPFMRWRDRFLFCAEALYKAQAETGEIKGHYLNATAGTCEEMIKRAVFARELGVPIVMHDYLTGGFTANTSLSHYCRDNGLLLHIHRAMHAVIDRQKNHGMHFRVLAKALRLSGGDHIHSGTVVGKLEGEREITLGFVDLLRDDFVEKDRSRGIYFTQDWVSLPGVLPVASGGIHVWHMPALTEIFGDDSVLQFGGGTLGHPWGNAPGAVANRVALEACVQARNEGRDLASEGNQIIREASKWSPELAAACEVWKE</sequence>